<accession>A9CB95</accession>
<keyword id="KW-1185">Reference proteome</keyword>
<organism>
    <name type="scientific">Snake adenovirus serotype 1</name>
    <name type="common">SnAdV-1</name>
    <dbReference type="NCBI Taxonomy" id="189830"/>
    <lineage>
        <taxon>Viruses</taxon>
        <taxon>Varidnaviria</taxon>
        <taxon>Bamfordvirae</taxon>
        <taxon>Preplasmiviricota</taxon>
        <taxon>Tectiliviricetes</taxon>
        <taxon>Rowavirales</taxon>
        <taxon>Adenoviridae</taxon>
        <taxon>Atadenovirus</taxon>
        <taxon>Snake atadenovirus A</taxon>
    </lineage>
</organism>
<reference key="1">
    <citation type="journal article" date="2002" name="J. Gen. Virol.">
        <title>Genetic analysis of an adenovirus isolated from corn snake (Elaphe guttata) implies common origin with the members of the proposed new genus Atadenovirus.</title>
        <authorList>
            <person name="Farkas S.L."/>
            <person name="Benko M."/>
            <person name="Elo P.T."/>
            <person name="Ursu K."/>
            <person name="Dan A."/>
            <person name="Ahne W."/>
            <person name="Harrach B."/>
        </authorList>
    </citation>
    <scope>NUCLEOTIDE SEQUENCE [GENOMIC DNA]</scope>
</reference>
<feature type="chain" id="PRO_0000425928" description="Probable U-exon protein">
    <location>
        <begin position="1"/>
        <end position="58"/>
    </location>
</feature>
<protein>
    <recommendedName>
        <fullName>Probable U-exon protein</fullName>
    </recommendedName>
</protein>
<organismHost>
    <name type="scientific">Pantherophis guttatus</name>
    <name type="common">Corn snake</name>
    <name type="synonym">Elaphe guttata</name>
    <dbReference type="NCBI Taxonomy" id="94885"/>
</organismHost>
<name>UXP_ADES1</name>
<dbReference type="EMBL" id="DQ106414">
    <property type="protein sequence ID" value="ABA47245.1"/>
    <property type="molecule type" value="Genomic_DNA"/>
</dbReference>
<dbReference type="RefSeq" id="YP_001552262.1">
    <property type="nucleotide sequence ID" value="NC_009989.1"/>
</dbReference>
<dbReference type="GeneID" id="10973876"/>
<dbReference type="KEGG" id="vg:10973876"/>
<dbReference type="OrthoDB" id="38682at10239"/>
<dbReference type="Proteomes" id="UP000136605">
    <property type="component" value="Genome"/>
</dbReference>
<proteinExistence type="predicted"/>
<sequence length="58" mass="6807">MTEVRLNNQTLVRLEAPTPSWKWIKLSRTLKLKMLNLPGVKIFRGAPENEDQDRDNLM</sequence>